<proteinExistence type="evidence at transcript level"/>
<organism evidence="5">
    <name type="scientific">Scutigera coleoptrata</name>
    <name type="common">House centipede</name>
    <dbReference type="NCBI Taxonomy" id="29022"/>
    <lineage>
        <taxon>Eukaryota</taxon>
        <taxon>Metazoa</taxon>
        <taxon>Ecdysozoa</taxon>
        <taxon>Arthropoda</taxon>
        <taxon>Myriapoda</taxon>
        <taxon>Chilopoda</taxon>
        <taxon>Notostigmophora</taxon>
        <taxon>Scutigeromorpha</taxon>
        <taxon>Scutigeridae</taxon>
        <taxon>Scutigera</taxon>
    </lineage>
</organism>
<gene>
    <name type="primary">HCX</name>
    <name type="synonym">HC3</name>
</gene>
<feature type="signal peptide" evidence="3">
    <location>
        <begin position="1"/>
        <end position="20"/>
    </location>
</feature>
<feature type="chain" id="PRO_0000013349" description="Hemocyanin subunit X">
    <location>
        <begin position="21"/>
        <end position="685"/>
    </location>
</feature>
<feature type="binding site" evidence="2">
    <location>
        <position position="210"/>
    </location>
    <ligand>
        <name>Cu cation</name>
        <dbReference type="ChEBI" id="CHEBI:23378"/>
        <label>A</label>
    </ligand>
</feature>
<feature type="binding site" evidence="2">
    <location>
        <position position="214"/>
    </location>
    <ligand>
        <name>Cu cation</name>
        <dbReference type="ChEBI" id="CHEBI:23378"/>
        <label>A</label>
    </ligand>
</feature>
<feature type="binding site" evidence="2">
    <location>
        <position position="243"/>
    </location>
    <ligand>
        <name>Cu cation</name>
        <dbReference type="ChEBI" id="CHEBI:23378"/>
        <label>A</label>
    </ligand>
</feature>
<feature type="binding site" evidence="2">
    <location>
        <position position="367"/>
    </location>
    <ligand>
        <name>Cu cation</name>
        <dbReference type="ChEBI" id="CHEBI:23378"/>
        <label>B</label>
    </ligand>
</feature>
<feature type="binding site" evidence="2">
    <location>
        <position position="371"/>
    </location>
    <ligand>
        <name>Cu cation</name>
        <dbReference type="ChEBI" id="CHEBI:23378"/>
        <label>B</label>
    </ligand>
</feature>
<feature type="binding site" evidence="2">
    <location>
        <position position="407"/>
    </location>
    <ligand>
        <name>Cu cation</name>
        <dbReference type="ChEBI" id="CHEBI:23378"/>
        <label>B</label>
    </ligand>
</feature>
<feature type="glycosylation site" description="N-linked (GlcNAc...) asparagine" evidence="4">
    <location>
        <position position="329"/>
    </location>
</feature>
<feature type="disulfide bond" evidence="2">
    <location>
        <begin position="577"/>
        <end position="625"/>
    </location>
</feature>
<sequence>MKYCTESLILILAVIGCISAAINFKCPKGTAEEKHQKEIYDLVQRINRPLIPQFKEPNFPTSFLIKGKDPKEFFQAIGHLPKKEVFSLFDERHWDEAMTAYEYLYEAETLDDFIDIAKILYLHLNEDMFYYVFSFAVLYRKDTRNVRLPQVHDVYPDKFLKTDIINKIKQANYQGKQHPVIDATKEFHDLRNPVSYLHYFLEDIGMNSHHYHWHVMNSALRKAYPTEGEKKFYRKGELFYHMHHQMLNRYELERLSNGLPRCPTFENWDDPIAEGYASHLAVDRTGYRYTFRPDNLHVRDLPELTKDNMRVWRDRIFDAATSCSVLRENGSFVKICRTRFYGGLNILGNLIESNLRSINRMFYGNIHCYAHVIAARVTDPDGKYGQGNGVMYDVATSARDPLFYQWHKFLDHFFYEHLTKLPTNHLFHLQNPDVSITNLEIISNGRKNEIHTFWENDIMEISKGHSFTLNSDAKVKIQHLQHEKFEIHLTVQNDKGEDTDLFVRIFLLPLEDEESHELSLEEMVRMAVDIEKRVIPAKPGSNDIVISSRSIGAPANKFFGSFEERYISEDCNFHSHCGWPNYLLVPKGSSQGTPFAFVVMLTLAEDDFTPNMDDTCFCADSWSHCGSLFIQYPENVEMGFPFQPIIECTKEEFFALPNIAKQEVIIKFTGETKDSPLVIQLENDS</sequence>
<accession>Q8T116</accession>
<keyword id="KW-0186">Copper</keyword>
<keyword id="KW-1015">Disulfide bond</keyword>
<keyword id="KW-0325">Glycoprotein</keyword>
<keyword id="KW-0479">Metal-binding</keyword>
<keyword id="KW-0561">Oxygen transport</keyword>
<keyword id="KW-0964">Secreted</keyword>
<keyword id="KW-0732">Signal</keyword>
<keyword id="KW-0813">Transport</keyword>
<name>HCYX_SCUCO</name>
<evidence type="ECO:0000250" key="1"/>
<evidence type="ECO:0000250" key="2">
    <source>
        <dbReference type="UniProtKB" id="P10787"/>
    </source>
</evidence>
<evidence type="ECO:0000255" key="3"/>
<evidence type="ECO:0000305" key="4"/>
<evidence type="ECO:0000312" key="5">
    <source>
        <dbReference type="EMBL" id="CAD24085.1"/>
    </source>
</evidence>
<comment type="function">
    <text evidence="4">Hemocyanins are copper-containing oxygen carriers occurring freely dissolved in the hemolymph of many mollusks and arthropods.</text>
</comment>
<comment type="subcellular location">
    <subcellularLocation>
        <location evidence="1">Secreted</location>
        <location evidence="1">Extracellular space</location>
    </subcellularLocation>
</comment>
<comment type="similarity">
    <text evidence="4">Belongs to the tyrosinase family. Hemocyanin subfamily.</text>
</comment>
<protein>
    <recommendedName>
        <fullName>Hemocyanin subunit X</fullName>
    </recommendedName>
</protein>
<dbReference type="EMBL" id="AJ431378">
    <property type="protein sequence ID" value="CAD24085.1"/>
    <property type="molecule type" value="mRNA"/>
</dbReference>
<dbReference type="SMR" id="Q8T116"/>
<dbReference type="GlyCosmos" id="Q8T116">
    <property type="glycosylation" value="1 site, No reported glycans"/>
</dbReference>
<dbReference type="GO" id="GO:0005576">
    <property type="term" value="C:extracellular region"/>
    <property type="evidence" value="ECO:0000250"/>
    <property type="project" value="UniProtKB"/>
</dbReference>
<dbReference type="GO" id="GO:0046872">
    <property type="term" value="F:metal ion binding"/>
    <property type="evidence" value="ECO:0007669"/>
    <property type="project" value="UniProtKB-KW"/>
</dbReference>
<dbReference type="GO" id="GO:0016491">
    <property type="term" value="F:oxidoreductase activity"/>
    <property type="evidence" value="ECO:0007669"/>
    <property type="project" value="InterPro"/>
</dbReference>
<dbReference type="GO" id="GO:0005344">
    <property type="term" value="F:oxygen carrier activity"/>
    <property type="evidence" value="ECO:0007669"/>
    <property type="project" value="UniProtKB-KW"/>
</dbReference>
<dbReference type="Gene3D" id="1.10.1280.10">
    <property type="entry name" value="Di-copper center containing domain from catechol oxidase"/>
    <property type="match status" value="1"/>
</dbReference>
<dbReference type="Gene3D" id="2.60.40.1520">
    <property type="entry name" value="Hemocyanin, C-terminal domain"/>
    <property type="match status" value="1"/>
</dbReference>
<dbReference type="Gene3D" id="1.20.1370.10">
    <property type="entry name" value="Hemocyanin, N-terminal domain"/>
    <property type="match status" value="1"/>
</dbReference>
<dbReference type="InterPro" id="IPR008922">
    <property type="entry name" value="Di-copper_centre_dom_sf"/>
</dbReference>
<dbReference type="InterPro" id="IPR013788">
    <property type="entry name" value="Hemocyanin/hexamerin"/>
</dbReference>
<dbReference type="InterPro" id="IPR000896">
    <property type="entry name" value="Hemocyanin/hexamerin_mid_dom"/>
</dbReference>
<dbReference type="InterPro" id="IPR005203">
    <property type="entry name" value="Hemocyanin_C"/>
</dbReference>
<dbReference type="InterPro" id="IPR037020">
    <property type="entry name" value="Hemocyanin_C_sf"/>
</dbReference>
<dbReference type="InterPro" id="IPR005204">
    <property type="entry name" value="Hemocyanin_N"/>
</dbReference>
<dbReference type="InterPro" id="IPR036697">
    <property type="entry name" value="Hemocyanin_N_sf"/>
</dbReference>
<dbReference type="InterPro" id="IPR014756">
    <property type="entry name" value="Ig_E-set"/>
</dbReference>
<dbReference type="InterPro" id="IPR002227">
    <property type="entry name" value="Tyrosinase_Cu-bd"/>
</dbReference>
<dbReference type="PANTHER" id="PTHR11511:SF5">
    <property type="entry name" value="FAT-BODY PROTEIN 1-RELATED"/>
    <property type="match status" value="1"/>
</dbReference>
<dbReference type="PANTHER" id="PTHR11511">
    <property type="entry name" value="LARVAL STORAGE PROTEIN/PHENOLOXIDASE"/>
    <property type="match status" value="1"/>
</dbReference>
<dbReference type="Pfam" id="PF03723">
    <property type="entry name" value="Hemocyanin_C"/>
    <property type="match status" value="1"/>
</dbReference>
<dbReference type="Pfam" id="PF00372">
    <property type="entry name" value="Hemocyanin_M"/>
    <property type="match status" value="1"/>
</dbReference>
<dbReference type="Pfam" id="PF03722">
    <property type="entry name" value="Hemocyanin_N"/>
    <property type="match status" value="1"/>
</dbReference>
<dbReference type="PRINTS" id="PR00187">
    <property type="entry name" value="HAEMOCYANIN"/>
</dbReference>
<dbReference type="SUPFAM" id="SSF48056">
    <property type="entry name" value="Di-copper centre-containing domain"/>
    <property type="match status" value="1"/>
</dbReference>
<dbReference type="SUPFAM" id="SSF81296">
    <property type="entry name" value="E set domains"/>
    <property type="match status" value="1"/>
</dbReference>
<dbReference type="SUPFAM" id="SSF48050">
    <property type="entry name" value="Hemocyanin, N-terminal domain"/>
    <property type="match status" value="1"/>
</dbReference>
<dbReference type="PROSITE" id="PS00210">
    <property type="entry name" value="HEMOCYANIN_2"/>
    <property type="match status" value="1"/>
</dbReference>
<dbReference type="PROSITE" id="PS00498">
    <property type="entry name" value="TYROSINASE_2"/>
    <property type="match status" value="1"/>
</dbReference>
<reference evidence="4" key="1">
    <citation type="journal article" date="2003" name="Eur. J. Biochem.">
        <title>Complete subunit sequences, structure and evolution of the 6 x 6-mer hemocyanin from the common house centipede, Scutigera coleoptrata.</title>
        <authorList>
            <person name="Kusche K."/>
            <person name="Hembach A."/>
            <person name="Hagner-Holler S."/>
            <person name="Gebauer W."/>
            <person name="Burmester T."/>
        </authorList>
    </citation>
    <scope>NUCLEOTIDE SEQUENCE [MRNA]</scope>
</reference>